<proteinExistence type="evidence at transcript level"/>
<comment type="tissue specificity">
    <text>Expressed in fetal tissues.</text>
</comment>
<comment type="miscellaneous">
    <text>This protein is coded from a SMAD5 gene antisense transcript.</text>
</comment>
<feature type="chain" id="PRO_0000079777" description="SMAD5 antisense gene protein 1">
    <location>
        <begin position="1"/>
        <end position="95"/>
    </location>
</feature>
<feature type="region of interest" description="Disordered" evidence="1">
    <location>
        <begin position="1"/>
        <end position="24"/>
    </location>
</feature>
<feature type="region of interest" description="Disordered" evidence="1">
    <location>
        <begin position="43"/>
        <end position="70"/>
    </location>
</feature>
<feature type="compositionally biased region" description="Pro residues" evidence="1">
    <location>
        <begin position="7"/>
        <end position="19"/>
    </location>
</feature>
<feature type="sequence variant" id="VAR_020103" description="In dbSNP:rs3764941.">
    <original>K</original>
    <variation>N</variation>
    <location>
        <position position="85"/>
    </location>
</feature>
<reference key="1">
    <citation type="journal article" date="1999" name="Biochem. Biophys. Res. Commun.">
        <title>An antisense transcript to SMAD5 expressed in fetal and tumor tissues.</title>
        <authorList>
            <person name="Zavadil J."/>
            <person name="Svoboda P."/>
            <person name="Liang H."/>
            <person name="Kottickal L.V."/>
            <person name="Nagarajan L."/>
        </authorList>
    </citation>
    <scope>NUCLEOTIDE SEQUENCE [MRNA]</scope>
</reference>
<gene>
    <name type="primary">SMAD5-AS1</name>
    <name type="synonym">DAMS</name>
    <name type="synonym">SMAD5OS</name>
</gene>
<organism>
    <name type="scientific">Homo sapiens</name>
    <name type="common">Human</name>
    <dbReference type="NCBI Taxonomy" id="9606"/>
    <lineage>
        <taxon>Eukaryota</taxon>
        <taxon>Metazoa</taxon>
        <taxon>Chordata</taxon>
        <taxon>Craniata</taxon>
        <taxon>Vertebrata</taxon>
        <taxon>Euteleostomi</taxon>
        <taxon>Mammalia</taxon>
        <taxon>Eutheria</taxon>
        <taxon>Euarchontoglires</taxon>
        <taxon>Primates</taxon>
        <taxon>Haplorrhini</taxon>
        <taxon>Catarrhini</taxon>
        <taxon>Hominidae</taxon>
        <taxon>Homo</taxon>
    </lineage>
</organism>
<sequence length="95" mass="10312">MHKQPKLLPPPATPPPPPQSSSWSGNIVFTIKINIWLRVFSHSSPTGLPKPHSPMPSPPEPEHSVGKPANVQIPQVSSPEFCNQKSVLATEHAQT</sequence>
<protein>
    <recommendedName>
        <fullName>SMAD5 antisense gene protein 1</fullName>
    </recommendedName>
    <alternativeName>
        <fullName>10.3 kDa proline-rich protein DAMS</fullName>
    </alternativeName>
    <alternativeName>
        <fullName>SMAD5 antisense RNA 1</fullName>
    </alternativeName>
    <alternativeName>
        <fullName>SMAD5 opposite strand protein</fullName>
    </alternativeName>
</protein>
<name>SMA5O_HUMAN</name>
<dbReference type="EMBL" id="AF071111">
    <property type="protein sequence ID" value="AAD20804.1"/>
    <property type="molecule type" value="mRNA"/>
</dbReference>
<dbReference type="GlyGen" id="Q9Y6J3">
    <property type="glycosylation" value="1 site"/>
</dbReference>
<dbReference type="BioMuta" id="HGNC:30586"/>
<dbReference type="jPOST" id="Q9Y6J3"/>
<dbReference type="AGR" id="HGNC:30586"/>
<dbReference type="GeneCards" id="SMAD5-AS1"/>
<dbReference type="HGNC" id="HGNC:30586">
    <property type="gene designation" value="SMAD5-AS1"/>
</dbReference>
<dbReference type="neXtProt" id="NX_Q9Y6J3"/>
<dbReference type="InParanoid" id="Q9Y6J3"/>
<dbReference type="PAN-GO" id="Q9Y6J3">
    <property type="GO annotations" value="0 GO annotations based on evolutionary models"/>
</dbReference>
<dbReference type="ChiTaRS" id="SMAD5-AS1">
    <property type="organism name" value="human"/>
</dbReference>
<dbReference type="Pharos" id="Q9Y6J3">
    <property type="development level" value="Tdark"/>
</dbReference>
<dbReference type="PRO" id="PR:Q9Y6J3"/>
<dbReference type="Proteomes" id="UP000005640">
    <property type="component" value="Unplaced"/>
</dbReference>
<dbReference type="RNAct" id="Q9Y6J3">
    <property type="molecule type" value="protein"/>
</dbReference>
<dbReference type="GO" id="GO:0007165">
    <property type="term" value="P:signal transduction"/>
    <property type="evidence" value="ECO:0000304"/>
    <property type="project" value="ProtInc"/>
</dbReference>
<accession>Q9Y6J3</accession>
<keyword id="KW-1185">Reference proteome</keyword>
<evidence type="ECO:0000256" key="1">
    <source>
        <dbReference type="SAM" id="MobiDB-lite"/>
    </source>
</evidence>